<sequence length="568" mass="66399">MKFDKYEYLQDLMRRRGFAWGSFEIYGGARGFYDYGPLGATIKRKIEKKIREAFIREGFFEIETPDITPEQVFIASGHVEKFVDPLVECKKCGARFRADHLIEETLGIDVEGKSAEEMTKIIREHNIRCPECGGELSDVWYFNLMFETYIGPYKDKKAYLRPETAQGIFVNFKRLNAFARNKLPFGVFQIGKAYRNEISPRQGMIRLREFTQAEVEIFFNPNETEHPHFDEVKDEVLRLYPIEHQLKDLGMIELTAEEAVKKGYVMNTFFAYYMVMIKRILLDIGIPEDKIRFRQQLPEERAHYSADTWDAEIYSERFGWVECVGLAYRTDYDLSRHMKMSGADLTVMIHYDKPKIVKKLNVTLNMKKVGPKLKEKVKEINEKLKSMSQEELRKLVEELNANGKVIIEGHELEKEDLIIKEVEEKIQGEKIVPHVLEPSFGIDRPFYLLLENSLTVDEDGRVYLKIKKDMAPIEVAVLPLVAKEPLTTIAYEIYRNLQKEGFIVVYDEKDSIGKRYMRYDEIGTPYCVTVDNQTPEDGTVTIRDRDTREQIRVKIEEVPRKLKELIFG</sequence>
<dbReference type="EC" id="6.1.1.14" evidence="1"/>
<dbReference type="EMBL" id="AE009950">
    <property type="protein sequence ID" value="AAL81751.1"/>
    <property type="molecule type" value="Genomic_DNA"/>
</dbReference>
<dbReference type="RefSeq" id="WP_011012774.1">
    <property type="nucleotide sequence ID" value="NZ_CP023154.1"/>
</dbReference>
<dbReference type="SMR" id="Q8U0G2"/>
<dbReference type="STRING" id="186497.PF1627"/>
<dbReference type="PaxDb" id="186497-PF1627"/>
<dbReference type="GeneID" id="41713452"/>
<dbReference type="KEGG" id="pfu:PF1627"/>
<dbReference type="PATRIC" id="fig|186497.12.peg.1694"/>
<dbReference type="eggNOG" id="arCOG00405">
    <property type="taxonomic scope" value="Archaea"/>
</dbReference>
<dbReference type="HOGENOM" id="CLU_015515_2_1_2"/>
<dbReference type="OrthoDB" id="6113at2157"/>
<dbReference type="PhylomeDB" id="Q8U0G2"/>
<dbReference type="Proteomes" id="UP000001013">
    <property type="component" value="Chromosome"/>
</dbReference>
<dbReference type="GO" id="GO:0005737">
    <property type="term" value="C:cytoplasm"/>
    <property type="evidence" value="ECO:0007669"/>
    <property type="project" value="UniProtKB-SubCell"/>
</dbReference>
<dbReference type="GO" id="GO:0005524">
    <property type="term" value="F:ATP binding"/>
    <property type="evidence" value="ECO:0007669"/>
    <property type="project" value="UniProtKB-UniRule"/>
</dbReference>
<dbReference type="GO" id="GO:0004820">
    <property type="term" value="F:glycine-tRNA ligase activity"/>
    <property type="evidence" value="ECO:0000250"/>
    <property type="project" value="UniProtKB"/>
</dbReference>
<dbReference type="GO" id="GO:0046983">
    <property type="term" value="F:protein dimerization activity"/>
    <property type="evidence" value="ECO:0000250"/>
    <property type="project" value="UniProtKB"/>
</dbReference>
<dbReference type="GO" id="GO:0006426">
    <property type="term" value="P:glycyl-tRNA aminoacylation"/>
    <property type="evidence" value="ECO:0007669"/>
    <property type="project" value="UniProtKB-UniRule"/>
</dbReference>
<dbReference type="CDD" id="cd00774">
    <property type="entry name" value="GlyRS-like_core"/>
    <property type="match status" value="1"/>
</dbReference>
<dbReference type="CDD" id="cd00858">
    <property type="entry name" value="GlyRS_anticodon"/>
    <property type="match status" value="1"/>
</dbReference>
<dbReference type="FunFam" id="3.30.40.230:FF:000005">
    <property type="entry name" value="Glycine--tRNA ligase"/>
    <property type="match status" value="1"/>
</dbReference>
<dbReference type="FunFam" id="3.30.930.10:FF:000091">
    <property type="entry name" value="Glycine--tRNA ligase"/>
    <property type="match status" value="1"/>
</dbReference>
<dbReference type="FunFam" id="3.30.930.10:FF:000179">
    <property type="entry name" value="Glycine--tRNA ligase"/>
    <property type="match status" value="1"/>
</dbReference>
<dbReference type="FunFam" id="3.40.50.800:FF:000002">
    <property type="entry name" value="Glycine--tRNA ligase"/>
    <property type="match status" value="1"/>
</dbReference>
<dbReference type="Gene3D" id="3.30.720.200">
    <property type="match status" value="1"/>
</dbReference>
<dbReference type="Gene3D" id="3.40.50.800">
    <property type="entry name" value="Anticodon-binding domain"/>
    <property type="match status" value="1"/>
</dbReference>
<dbReference type="Gene3D" id="3.30.930.10">
    <property type="entry name" value="Bira Bifunctional Protein, Domain 2"/>
    <property type="match status" value="2"/>
</dbReference>
<dbReference type="HAMAP" id="MF_00253_A">
    <property type="entry name" value="Gly_tRNA_synth_A"/>
    <property type="match status" value="1"/>
</dbReference>
<dbReference type="InterPro" id="IPR002314">
    <property type="entry name" value="aa-tRNA-synt_IIb"/>
</dbReference>
<dbReference type="InterPro" id="IPR006195">
    <property type="entry name" value="aa-tRNA-synth_II"/>
</dbReference>
<dbReference type="InterPro" id="IPR045864">
    <property type="entry name" value="aa-tRNA-synth_II/BPL/LPL"/>
</dbReference>
<dbReference type="InterPro" id="IPR004154">
    <property type="entry name" value="Anticodon-bd"/>
</dbReference>
<dbReference type="InterPro" id="IPR036621">
    <property type="entry name" value="Anticodon-bd_dom_sf"/>
</dbReference>
<dbReference type="InterPro" id="IPR027031">
    <property type="entry name" value="Gly-tRNA_synthase/POLG2"/>
</dbReference>
<dbReference type="InterPro" id="IPR022960">
    <property type="entry name" value="Gly_tRNA_ligase_arc"/>
</dbReference>
<dbReference type="InterPro" id="IPR033731">
    <property type="entry name" value="GlyRS-like_core"/>
</dbReference>
<dbReference type="InterPro" id="IPR002315">
    <property type="entry name" value="tRNA-synt_gly"/>
</dbReference>
<dbReference type="NCBIfam" id="TIGR00389">
    <property type="entry name" value="glyS_dimeric"/>
    <property type="match status" value="1"/>
</dbReference>
<dbReference type="NCBIfam" id="NF003211">
    <property type="entry name" value="PRK04173.1"/>
    <property type="match status" value="1"/>
</dbReference>
<dbReference type="PANTHER" id="PTHR10745:SF0">
    <property type="entry name" value="GLYCINE--TRNA LIGASE"/>
    <property type="match status" value="1"/>
</dbReference>
<dbReference type="PANTHER" id="PTHR10745">
    <property type="entry name" value="GLYCYL-TRNA SYNTHETASE/DNA POLYMERASE SUBUNIT GAMMA-2"/>
    <property type="match status" value="1"/>
</dbReference>
<dbReference type="Pfam" id="PF03129">
    <property type="entry name" value="HGTP_anticodon"/>
    <property type="match status" value="1"/>
</dbReference>
<dbReference type="Pfam" id="PF00587">
    <property type="entry name" value="tRNA-synt_2b"/>
    <property type="match status" value="1"/>
</dbReference>
<dbReference type="PRINTS" id="PR01043">
    <property type="entry name" value="TRNASYNTHGLY"/>
</dbReference>
<dbReference type="SUPFAM" id="SSF52954">
    <property type="entry name" value="Class II aaRS ABD-related"/>
    <property type="match status" value="1"/>
</dbReference>
<dbReference type="SUPFAM" id="SSF55681">
    <property type="entry name" value="Class II aaRS and biotin synthetases"/>
    <property type="match status" value="1"/>
</dbReference>
<dbReference type="PROSITE" id="PS50862">
    <property type="entry name" value="AA_TRNA_LIGASE_II"/>
    <property type="match status" value="1"/>
</dbReference>
<proteinExistence type="inferred from homology"/>
<accession>Q8U0G2</accession>
<organism>
    <name type="scientific">Pyrococcus furiosus (strain ATCC 43587 / DSM 3638 / JCM 8422 / Vc1)</name>
    <dbReference type="NCBI Taxonomy" id="186497"/>
    <lineage>
        <taxon>Archaea</taxon>
        <taxon>Methanobacteriati</taxon>
        <taxon>Methanobacteriota</taxon>
        <taxon>Thermococci</taxon>
        <taxon>Thermococcales</taxon>
        <taxon>Thermococcaceae</taxon>
        <taxon>Pyrococcus</taxon>
    </lineage>
</organism>
<keyword id="KW-0030">Aminoacyl-tRNA synthetase</keyword>
<keyword id="KW-0067">ATP-binding</keyword>
<keyword id="KW-0963">Cytoplasm</keyword>
<keyword id="KW-0436">Ligase</keyword>
<keyword id="KW-0547">Nucleotide-binding</keyword>
<keyword id="KW-0648">Protein biosynthesis</keyword>
<keyword id="KW-1185">Reference proteome</keyword>
<protein>
    <recommendedName>
        <fullName evidence="1">Glycine--tRNA ligase</fullName>
        <ecNumber evidence="1">6.1.1.14</ecNumber>
    </recommendedName>
    <alternativeName>
        <fullName evidence="1">Glycyl-tRNA synthetase</fullName>
        <shortName evidence="1">GlyRS</shortName>
    </alternativeName>
</protein>
<name>SYG_PYRFU</name>
<reference key="1">
    <citation type="journal article" date="1999" name="Genetics">
        <title>Divergence of the hyperthermophilic archaea Pyrococcus furiosus and P. horikoshii inferred from complete genomic sequences.</title>
        <authorList>
            <person name="Maeder D.L."/>
            <person name="Weiss R.B."/>
            <person name="Dunn D.M."/>
            <person name="Cherry J.L."/>
            <person name="Gonzalez J.M."/>
            <person name="DiRuggiero J."/>
            <person name="Robb F.T."/>
        </authorList>
    </citation>
    <scope>NUCLEOTIDE SEQUENCE [LARGE SCALE GENOMIC DNA]</scope>
    <source>
        <strain>ATCC 43587 / DSM 3638 / JCM 8422 / Vc1</strain>
    </source>
</reference>
<gene>
    <name evidence="1" type="primary">glyS</name>
    <name type="ordered locus">PF1627</name>
</gene>
<feature type="chain" id="PRO_0000072995" description="Glycine--tRNA ligase">
    <location>
        <begin position="1"/>
        <end position="568"/>
    </location>
</feature>
<feature type="binding site" evidence="1">
    <location>
        <position position="97"/>
    </location>
    <ligand>
        <name>substrate</name>
    </ligand>
</feature>
<feature type="binding site" evidence="1">
    <location>
        <position position="163"/>
    </location>
    <ligand>
        <name>substrate</name>
    </ligand>
</feature>
<feature type="binding site" evidence="1">
    <location>
        <begin position="195"/>
        <end position="197"/>
    </location>
    <ligand>
        <name>ATP</name>
        <dbReference type="ChEBI" id="CHEBI:30616"/>
    </ligand>
</feature>
<feature type="binding site" evidence="1">
    <location>
        <begin position="205"/>
        <end position="210"/>
    </location>
    <ligand>
        <name>ATP</name>
        <dbReference type="ChEBI" id="CHEBI:30616"/>
    </ligand>
</feature>
<feature type="binding site" evidence="1">
    <location>
        <begin position="210"/>
        <end position="214"/>
    </location>
    <ligand>
        <name>substrate</name>
    </ligand>
</feature>
<feature type="binding site" evidence="1">
    <location>
        <begin position="322"/>
        <end position="323"/>
    </location>
    <ligand>
        <name>ATP</name>
        <dbReference type="ChEBI" id="CHEBI:30616"/>
    </ligand>
</feature>
<feature type="binding site" evidence="1">
    <location>
        <begin position="437"/>
        <end position="441"/>
    </location>
    <ligand>
        <name>substrate</name>
    </ligand>
</feature>
<feature type="binding site" evidence="1">
    <location>
        <begin position="441"/>
        <end position="444"/>
    </location>
    <ligand>
        <name>ATP</name>
        <dbReference type="ChEBI" id="CHEBI:30616"/>
    </ligand>
</feature>
<evidence type="ECO:0000255" key="1">
    <source>
        <dbReference type="HAMAP-Rule" id="MF_00253"/>
    </source>
</evidence>
<comment type="function">
    <text evidence="1">Catalyzes the attachment of glycine to tRNA(Gly).</text>
</comment>
<comment type="catalytic activity">
    <reaction evidence="1">
        <text>tRNA(Gly) + glycine + ATP = glycyl-tRNA(Gly) + AMP + diphosphate</text>
        <dbReference type="Rhea" id="RHEA:16013"/>
        <dbReference type="Rhea" id="RHEA-COMP:9664"/>
        <dbReference type="Rhea" id="RHEA-COMP:9683"/>
        <dbReference type="ChEBI" id="CHEBI:30616"/>
        <dbReference type="ChEBI" id="CHEBI:33019"/>
        <dbReference type="ChEBI" id="CHEBI:57305"/>
        <dbReference type="ChEBI" id="CHEBI:78442"/>
        <dbReference type="ChEBI" id="CHEBI:78522"/>
        <dbReference type="ChEBI" id="CHEBI:456215"/>
        <dbReference type="EC" id="6.1.1.14"/>
    </reaction>
</comment>
<comment type="subcellular location">
    <subcellularLocation>
        <location>Cytoplasm</location>
    </subcellularLocation>
</comment>
<comment type="similarity">
    <text evidence="1">Belongs to the class-II aminoacyl-tRNA synthetase family.</text>
</comment>